<accession>A9M862</accession>
<proteinExistence type="inferred from homology"/>
<protein>
    <recommendedName>
        <fullName evidence="1">Small ribosomal subunit protein bS16</fullName>
    </recommendedName>
    <alternativeName>
        <fullName evidence="3">30S ribosomal protein S16</fullName>
    </alternativeName>
</protein>
<name>RS16_BRUC2</name>
<keyword id="KW-1185">Reference proteome</keyword>
<keyword id="KW-0687">Ribonucleoprotein</keyword>
<keyword id="KW-0689">Ribosomal protein</keyword>
<dbReference type="EMBL" id="CP000872">
    <property type="protein sequence ID" value="ABX62860.1"/>
    <property type="molecule type" value="Genomic_DNA"/>
</dbReference>
<dbReference type="RefSeq" id="WP_002967942.1">
    <property type="nucleotide sequence ID" value="NC_010103.1"/>
</dbReference>
<dbReference type="SMR" id="A9M862"/>
<dbReference type="GeneID" id="97533054"/>
<dbReference type="KEGG" id="bcs:BCAN_A1862"/>
<dbReference type="HOGENOM" id="CLU_100590_3_1_5"/>
<dbReference type="PhylomeDB" id="A9M862"/>
<dbReference type="Proteomes" id="UP000001385">
    <property type="component" value="Chromosome I"/>
</dbReference>
<dbReference type="GO" id="GO:0005737">
    <property type="term" value="C:cytoplasm"/>
    <property type="evidence" value="ECO:0007669"/>
    <property type="project" value="UniProtKB-ARBA"/>
</dbReference>
<dbReference type="GO" id="GO:0015935">
    <property type="term" value="C:small ribosomal subunit"/>
    <property type="evidence" value="ECO:0007669"/>
    <property type="project" value="TreeGrafter"/>
</dbReference>
<dbReference type="GO" id="GO:0003735">
    <property type="term" value="F:structural constituent of ribosome"/>
    <property type="evidence" value="ECO:0007669"/>
    <property type="project" value="InterPro"/>
</dbReference>
<dbReference type="GO" id="GO:0006412">
    <property type="term" value="P:translation"/>
    <property type="evidence" value="ECO:0007669"/>
    <property type="project" value="UniProtKB-UniRule"/>
</dbReference>
<dbReference type="Gene3D" id="3.30.1320.10">
    <property type="match status" value="1"/>
</dbReference>
<dbReference type="HAMAP" id="MF_00385">
    <property type="entry name" value="Ribosomal_bS16"/>
    <property type="match status" value="1"/>
</dbReference>
<dbReference type="InterPro" id="IPR000307">
    <property type="entry name" value="Ribosomal_bS16"/>
</dbReference>
<dbReference type="InterPro" id="IPR023803">
    <property type="entry name" value="Ribosomal_bS16_dom_sf"/>
</dbReference>
<dbReference type="NCBIfam" id="TIGR00002">
    <property type="entry name" value="S16"/>
    <property type="match status" value="1"/>
</dbReference>
<dbReference type="PANTHER" id="PTHR12919">
    <property type="entry name" value="30S RIBOSOMAL PROTEIN S16"/>
    <property type="match status" value="1"/>
</dbReference>
<dbReference type="PANTHER" id="PTHR12919:SF20">
    <property type="entry name" value="SMALL RIBOSOMAL SUBUNIT PROTEIN BS16M"/>
    <property type="match status" value="1"/>
</dbReference>
<dbReference type="Pfam" id="PF00886">
    <property type="entry name" value="Ribosomal_S16"/>
    <property type="match status" value="1"/>
</dbReference>
<dbReference type="SUPFAM" id="SSF54565">
    <property type="entry name" value="Ribosomal protein S16"/>
    <property type="match status" value="1"/>
</dbReference>
<feature type="chain" id="PRO_1000080137" description="Small ribosomal subunit protein bS16">
    <location>
        <begin position="1"/>
        <end position="134"/>
    </location>
</feature>
<feature type="region of interest" description="Disordered" evidence="2">
    <location>
        <begin position="79"/>
        <end position="134"/>
    </location>
</feature>
<feature type="compositionally biased region" description="Low complexity" evidence="2">
    <location>
        <begin position="115"/>
        <end position="134"/>
    </location>
</feature>
<comment type="similarity">
    <text evidence="1">Belongs to the bacterial ribosomal protein bS16 family.</text>
</comment>
<sequence>MALKIRLARAGSKKRPYYHVVVADVRAPRDGRFIETVGSWNPVLPKDAERVKLDAERIQHWIAQGAQPTDRVLRFLDQAGIAKRPSRNNPTKGEPGKKAQERLALAKQAEEEAAAKAAEAAAAAAAPAEEAASE</sequence>
<organism>
    <name type="scientific">Brucella canis (strain ATCC 23365 / NCTC 10854 / RM-666)</name>
    <dbReference type="NCBI Taxonomy" id="483179"/>
    <lineage>
        <taxon>Bacteria</taxon>
        <taxon>Pseudomonadati</taxon>
        <taxon>Pseudomonadota</taxon>
        <taxon>Alphaproteobacteria</taxon>
        <taxon>Hyphomicrobiales</taxon>
        <taxon>Brucellaceae</taxon>
        <taxon>Brucella/Ochrobactrum group</taxon>
        <taxon>Brucella</taxon>
    </lineage>
</organism>
<reference key="1">
    <citation type="submission" date="2007-10" db="EMBL/GenBank/DDBJ databases">
        <title>Brucella canis ATCC 23365 whole genome shotgun sequencing project.</title>
        <authorList>
            <person name="Setubal J.C."/>
            <person name="Bowns C."/>
            <person name="Boyle S."/>
            <person name="Crasta O.R."/>
            <person name="Czar M.J."/>
            <person name="Dharmanolla C."/>
            <person name="Gillespie J.J."/>
            <person name="Kenyon R.W."/>
            <person name="Lu J."/>
            <person name="Mane S."/>
            <person name="Mohapatra S."/>
            <person name="Nagrani S."/>
            <person name="Purkayastha A."/>
            <person name="Rajasimha H.K."/>
            <person name="Shallom J.M."/>
            <person name="Shallom S."/>
            <person name="Shukla M."/>
            <person name="Snyder E.E."/>
            <person name="Sobral B.W."/>
            <person name="Wattam A.R."/>
            <person name="Will R."/>
            <person name="Williams K."/>
            <person name="Yoo H."/>
            <person name="Bruce D."/>
            <person name="Detter C."/>
            <person name="Munk C."/>
            <person name="Brettin T.S."/>
        </authorList>
    </citation>
    <scope>NUCLEOTIDE SEQUENCE [LARGE SCALE GENOMIC DNA]</scope>
    <source>
        <strain>ATCC 23365 / NCTC 10854 / RM-666</strain>
    </source>
</reference>
<evidence type="ECO:0000255" key="1">
    <source>
        <dbReference type="HAMAP-Rule" id="MF_00385"/>
    </source>
</evidence>
<evidence type="ECO:0000256" key="2">
    <source>
        <dbReference type="SAM" id="MobiDB-lite"/>
    </source>
</evidence>
<evidence type="ECO:0000305" key="3"/>
<gene>
    <name evidence="1" type="primary">rpsP</name>
    <name type="ordered locus">BCAN_A1862</name>
</gene>